<organism>
    <name type="scientific">Thiobacillus denitrificans (strain ATCC 25259 / T1)</name>
    <dbReference type="NCBI Taxonomy" id="292415"/>
    <lineage>
        <taxon>Bacteria</taxon>
        <taxon>Pseudomonadati</taxon>
        <taxon>Pseudomonadota</taxon>
        <taxon>Betaproteobacteria</taxon>
        <taxon>Nitrosomonadales</taxon>
        <taxon>Thiobacillaceae</taxon>
        <taxon>Thiobacillus</taxon>
    </lineage>
</organism>
<name>CHED_THIDA</name>
<gene>
    <name evidence="1" type="primary">cheD</name>
    <name type="ordered locus">Tbd_1616</name>
</gene>
<reference key="1">
    <citation type="journal article" date="2006" name="J. Bacteriol.">
        <title>The genome sequence of the obligately chemolithoautotrophic, facultatively anaerobic bacterium Thiobacillus denitrificans.</title>
        <authorList>
            <person name="Beller H.R."/>
            <person name="Chain P.S."/>
            <person name="Letain T.E."/>
            <person name="Chakicherla A."/>
            <person name="Larimer F.W."/>
            <person name="Richardson P.M."/>
            <person name="Coleman M.A."/>
            <person name="Wood A.P."/>
            <person name="Kelly D.P."/>
        </authorList>
    </citation>
    <scope>NUCLEOTIDE SEQUENCE [LARGE SCALE GENOMIC DNA]</scope>
    <source>
        <strain>ATCC 25259 / T1</strain>
    </source>
</reference>
<feature type="chain" id="PRO_0000251073" description="Probable chemoreceptor glutamine deamidase CheD">
    <location>
        <begin position="1"/>
        <end position="202"/>
    </location>
</feature>
<dbReference type="EC" id="3.5.1.44" evidence="1"/>
<dbReference type="EMBL" id="CP000116">
    <property type="protein sequence ID" value="AAZ97569.1"/>
    <property type="molecule type" value="Genomic_DNA"/>
</dbReference>
<dbReference type="RefSeq" id="WP_011312128.1">
    <property type="nucleotide sequence ID" value="NC_007404.1"/>
</dbReference>
<dbReference type="SMR" id="Q3SIF9"/>
<dbReference type="STRING" id="292415.Tbd_1616"/>
<dbReference type="KEGG" id="tbd:Tbd_1616"/>
<dbReference type="eggNOG" id="COG1871">
    <property type="taxonomic scope" value="Bacteria"/>
</dbReference>
<dbReference type="HOGENOM" id="CLU_087854_0_0_4"/>
<dbReference type="OrthoDB" id="9807202at2"/>
<dbReference type="Proteomes" id="UP000008291">
    <property type="component" value="Chromosome"/>
</dbReference>
<dbReference type="GO" id="GO:0050568">
    <property type="term" value="F:protein-glutamine glutaminase activity"/>
    <property type="evidence" value="ECO:0007669"/>
    <property type="project" value="UniProtKB-UniRule"/>
</dbReference>
<dbReference type="GO" id="GO:0006935">
    <property type="term" value="P:chemotaxis"/>
    <property type="evidence" value="ECO:0007669"/>
    <property type="project" value="UniProtKB-UniRule"/>
</dbReference>
<dbReference type="CDD" id="cd16352">
    <property type="entry name" value="CheD"/>
    <property type="match status" value="1"/>
</dbReference>
<dbReference type="Gene3D" id="3.30.1330.200">
    <property type="match status" value="1"/>
</dbReference>
<dbReference type="HAMAP" id="MF_01440">
    <property type="entry name" value="CheD"/>
    <property type="match status" value="1"/>
</dbReference>
<dbReference type="InterPro" id="IPR038592">
    <property type="entry name" value="CheD-like_sf"/>
</dbReference>
<dbReference type="InterPro" id="IPR005659">
    <property type="entry name" value="Chemorcpt_Glu_NH3ase_CheD"/>
</dbReference>
<dbReference type="InterPro" id="IPR011324">
    <property type="entry name" value="Cytotoxic_necrot_fac-like_cat"/>
</dbReference>
<dbReference type="NCBIfam" id="NF010013">
    <property type="entry name" value="PRK13487.1"/>
    <property type="match status" value="1"/>
</dbReference>
<dbReference type="NCBIfam" id="NF010014">
    <property type="entry name" value="PRK13489.1"/>
    <property type="match status" value="1"/>
</dbReference>
<dbReference type="PANTHER" id="PTHR35147">
    <property type="entry name" value="CHEMORECEPTOR GLUTAMINE DEAMIDASE CHED-RELATED"/>
    <property type="match status" value="1"/>
</dbReference>
<dbReference type="PANTHER" id="PTHR35147:SF2">
    <property type="entry name" value="CHEMORECEPTOR GLUTAMINE DEAMIDASE CHED-RELATED"/>
    <property type="match status" value="1"/>
</dbReference>
<dbReference type="Pfam" id="PF03975">
    <property type="entry name" value="CheD"/>
    <property type="match status" value="1"/>
</dbReference>
<dbReference type="SUPFAM" id="SSF64438">
    <property type="entry name" value="CNF1/YfiH-like putative cysteine hydrolases"/>
    <property type="match status" value="1"/>
</dbReference>
<proteinExistence type="inferred from homology"/>
<keyword id="KW-0145">Chemotaxis</keyword>
<keyword id="KW-0378">Hydrolase</keyword>
<keyword id="KW-1185">Reference proteome</keyword>
<comment type="function">
    <text evidence="1">Probably deamidates glutamine residues to glutamate on methyl-accepting chemotaxis receptors (MCPs), playing an important role in chemotaxis.</text>
</comment>
<comment type="catalytic activity">
    <reaction evidence="1">
        <text>L-glutaminyl-[protein] + H2O = L-glutamyl-[protein] + NH4(+)</text>
        <dbReference type="Rhea" id="RHEA:16441"/>
        <dbReference type="Rhea" id="RHEA-COMP:10207"/>
        <dbReference type="Rhea" id="RHEA-COMP:10208"/>
        <dbReference type="ChEBI" id="CHEBI:15377"/>
        <dbReference type="ChEBI" id="CHEBI:28938"/>
        <dbReference type="ChEBI" id="CHEBI:29973"/>
        <dbReference type="ChEBI" id="CHEBI:30011"/>
        <dbReference type="EC" id="3.5.1.44"/>
    </reaction>
</comment>
<comment type="similarity">
    <text evidence="1">Belongs to the CheD family.</text>
</comment>
<sequence>MNSAIEEQLATNLYYDRNFDCETAKILPGEYYFTAKPMLIVTVLGSCVAACIRDRVSGIGGMNHFMLPDGGGDPGNPLSASMRYGAYAMEVLINQLLKAGARRENLEAKVFGGGNVLRGFTTMNVGERNAQFVRDFLRAENIRVVAEDLNDVHPRKVYFFPRTGRVLVKKLKQLNNYTLVKREQDYASRLKSNVVAGEVDLF</sequence>
<protein>
    <recommendedName>
        <fullName evidence="1">Probable chemoreceptor glutamine deamidase CheD</fullName>
        <ecNumber evidence="1">3.5.1.44</ecNumber>
    </recommendedName>
</protein>
<evidence type="ECO:0000255" key="1">
    <source>
        <dbReference type="HAMAP-Rule" id="MF_01440"/>
    </source>
</evidence>
<accession>Q3SIF9</accession>